<gene>
    <name evidence="7" type="primary">SRPP</name>
    <name evidence="6" type="synonym">RHS13</name>
    <name evidence="9" type="ordered locus">At4g02270</name>
    <name evidence="10" type="ORF">T2H3.4</name>
</gene>
<reference key="1">
    <citation type="journal article" date="1999" name="Nature">
        <title>Sequence and analysis of chromosome 4 of the plant Arabidopsis thaliana.</title>
        <authorList>
            <person name="Mayer K.F.X."/>
            <person name="Schueller C."/>
            <person name="Wambutt R."/>
            <person name="Murphy G."/>
            <person name="Volckaert G."/>
            <person name="Pohl T."/>
            <person name="Duesterhoeft A."/>
            <person name="Stiekema W."/>
            <person name="Entian K.-D."/>
            <person name="Terryn N."/>
            <person name="Harris B."/>
            <person name="Ansorge W."/>
            <person name="Brandt P."/>
            <person name="Grivell L.A."/>
            <person name="Rieger M."/>
            <person name="Weichselgartner M."/>
            <person name="de Simone V."/>
            <person name="Obermaier B."/>
            <person name="Mache R."/>
            <person name="Mueller M."/>
            <person name="Kreis M."/>
            <person name="Delseny M."/>
            <person name="Puigdomenech P."/>
            <person name="Watson M."/>
            <person name="Schmidtheini T."/>
            <person name="Reichert B."/>
            <person name="Portetelle D."/>
            <person name="Perez-Alonso M."/>
            <person name="Boutry M."/>
            <person name="Bancroft I."/>
            <person name="Vos P."/>
            <person name="Hoheisel J."/>
            <person name="Zimmermann W."/>
            <person name="Wedler H."/>
            <person name="Ridley P."/>
            <person name="Langham S.-A."/>
            <person name="McCullagh B."/>
            <person name="Bilham L."/>
            <person name="Robben J."/>
            <person name="van der Schueren J."/>
            <person name="Grymonprez B."/>
            <person name="Chuang Y.-J."/>
            <person name="Vandenbussche F."/>
            <person name="Braeken M."/>
            <person name="Weltjens I."/>
            <person name="Voet M."/>
            <person name="Bastiaens I."/>
            <person name="Aert R."/>
            <person name="Defoor E."/>
            <person name="Weitzenegger T."/>
            <person name="Bothe G."/>
            <person name="Ramsperger U."/>
            <person name="Hilbert H."/>
            <person name="Braun M."/>
            <person name="Holzer E."/>
            <person name="Brandt A."/>
            <person name="Peters S."/>
            <person name="van Staveren M."/>
            <person name="Dirkse W."/>
            <person name="Mooijman P."/>
            <person name="Klein Lankhorst R."/>
            <person name="Rose M."/>
            <person name="Hauf J."/>
            <person name="Koetter P."/>
            <person name="Berneiser S."/>
            <person name="Hempel S."/>
            <person name="Feldpausch M."/>
            <person name="Lamberth S."/>
            <person name="Van den Daele H."/>
            <person name="De Keyser A."/>
            <person name="Buysshaert C."/>
            <person name="Gielen J."/>
            <person name="Villarroel R."/>
            <person name="De Clercq R."/>
            <person name="van Montagu M."/>
            <person name="Rogers J."/>
            <person name="Cronin A."/>
            <person name="Quail M.A."/>
            <person name="Bray-Allen S."/>
            <person name="Clark L."/>
            <person name="Doggett J."/>
            <person name="Hall S."/>
            <person name="Kay M."/>
            <person name="Lennard N."/>
            <person name="McLay K."/>
            <person name="Mayes R."/>
            <person name="Pettett A."/>
            <person name="Rajandream M.A."/>
            <person name="Lyne M."/>
            <person name="Benes V."/>
            <person name="Rechmann S."/>
            <person name="Borkova D."/>
            <person name="Bloecker H."/>
            <person name="Scharfe M."/>
            <person name="Grimm M."/>
            <person name="Loehnert T.-H."/>
            <person name="Dose S."/>
            <person name="de Haan M."/>
            <person name="Maarse A.C."/>
            <person name="Schaefer M."/>
            <person name="Mueller-Auer S."/>
            <person name="Gabel C."/>
            <person name="Fuchs M."/>
            <person name="Fartmann B."/>
            <person name="Granderath K."/>
            <person name="Dauner D."/>
            <person name="Herzl A."/>
            <person name="Neumann S."/>
            <person name="Argiriou A."/>
            <person name="Vitale D."/>
            <person name="Liguori R."/>
            <person name="Piravandi E."/>
            <person name="Massenet O."/>
            <person name="Quigley F."/>
            <person name="Clabauld G."/>
            <person name="Muendlein A."/>
            <person name="Felber R."/>
            <person name="Schnabl S."/>
            <person name="Hiller R."/>
            <person name="Schmidt W."/>
            <person name="Lecharny A."/>
            <person name="Aubourg S."/>
            <person name="Chefdor F."/>
            <person name="Cooke R."/>
            <person name="Berger C."/>
            <person name="Monfort A."/>
            <person name="Casacuberta E."/>
            <person name="Gibbons T."/>
            <person name="Weber N."/>
            <person name="Vandenbol M."/>
            <person name="Bargues M."/>
            <person name="Terol J."/>
            <person name="Torres A."/>
            <person name="Perez-Perez A."/>
            <person name="Purnelle B."/>
            <person name="Bent E."/>
            <person name="Johnson S."/>
            <person name="Tacon D."/>
            <person name="Jesse T."/>
            <person name="Heijnen L."/>
            <person name="Schwarz S."/>
            <person name="Scholler P."/>
            <person name="Heber S."/>
            <person name="Francs P."/>
            <person name="Bielke C."/>
            <person name="Frishman D."/>
            <person name="Haase D."/>
            <person name="Lemcke K."/>
            <person name="Mewes H.-W."/>
            <person name="Stocker S."/>
            <person name="Zaccaria P."/>
            <person name="Bevan M."/>
            <person name="Wilson R.K."/>
            <person name="de la Bastide M."/>
            <person name="Habermann K."/>
            <person name="Parnell L."/>
            <person name="Dedhia N."/>
            <person name="Gnoj L."/>
            <person name="Schutz K."/>
            <person name="Huang E."/>
            <person name="Spiegel L."/>
            <person name="Sekhon M."/>
            <person name="Murray J."/>
            <person name="Sheet P."/>
            <person name="Cordes M."/>
            <person name="Abu-Threideh J."/>
            <person name="Stoneking T."/>
            <person name="Kalicki J."/>
            <person name="Graves T."/>
            <person name="Harmon G."/>
            <person name="Edwards J."/>
            <person name="Latreille P."/>
            <person name="Courtney L."/>
            <person name="Cloud J."/>
            <person name="Abbott A."/>
            <person name="Scott K."/>
            <person name="Johnson D."/>
            <person name="Minx P."/>
            <person name="Bentley D."/>
            <person name="Fulton B."/>
            <person name="Miller N."/>
            <person name="Greco T."/>
            <person name="Kemp K."/>
            <person name="Kramer J."/>
            <person name="Fulton L."/>
            <person name="Mardis E."/>
            <person name="Dante M."/>
            <person name="Pepin K."/>
            <person name="Hillier L.W."/>
            <person name="Nelson J."/>
            <person name="Spieth J."/>
            <person name="Ryan E."/>
            <person name="Andrews S."/>
            <person name="Geisel C."/>
            <person name="Layman D."/>
            <person name="Du H."/>
            <person name="Ali J."/>
            <person name="Berghoff A."/>
            <person name="Jones K."/>
            <person name="Drone K."/>
            <person name="Cotton M."/>
            <person name="Joshu C."/>
            <person name="Antonoiu B."/>
            <person name="Zidanic M."/>
            <person name="Strong C."/>
            <person name="Sun H."/>
            <person name="Lamar B."/>
            <person name="Yordan C."/>
            <person name="Ma P."/>
            <person name="Zhong J."/>
            <person name="Preston R."/>
            <person name="Vil D."/>
            <person name="Shekher M."/>
            <person name="Matero A."/>
            <person name="Shah R."/>
            <person name="Swaby I.K."/>
            <person name="O'Shaughnessy A."/>
            <person name="Rodriguez M."/>
            <person name="Hoffman J."/>
            <person name="Till S."/>
            <person name="Granat S."/>
            <person name="Shohdy N."/>
            <person name="Hasegawa A."/>
            <person name="Hameed A."/>
            <person name="Lodhi M."/>
            <person name="Johnson A."/>
            <person name="Chen E."/>
            <person name="Marra M.A."/>
            <person name="Martienssen R."/>
            <person name="McCombie W.R."/>
        </authorList>
    </citation>
    <scope>NUCLEOTIDE SEQUENCE [LARGE SCALE GENOMIC DNA]</scope>
    <source>
        <strain>cv. Columbia</strain>
    </source>
</reference>
<reference key="2">
    <citation type="journal article" date="2017" name="Plant J.">
        <title>Araport11: a complete reannotation of the Arabidopsis thaliana reference genome.</title>
        <authorList>
            <person name="Cheng C.Y."/>
            <person name="Krishnakumar V."/>
            <person name="Chan A.P."/>
            <person name="Thibaud-Nissen F."/>
            <person name="Schobel S."/>
            <person name="Town C.D."/>
        </authorList>
    </citation>
    <scope>GENOME REANNOTATION</scope>
    <source>
        <strain>cv. Columbia</strain>
    </source>
</reference>
<reference key="3">
    <citation type="journal article" date="2003" name="Science">
        <title>Empirical analysis of transcriptional activity in the Arabidopsis genome.</title>
        <authorList>
            <person name="Yamada K."/>
            <person name="Lim J."/>
            <person name="Dale J.M."/>
            <person name="Chen H."/>
            <person name="Shinn P."/>
            <person name="Palm C.J."/>
            <person name="Southwick A.M."/>
            <person name="Wu H.C."/>
            <person name="Kim C.J."/>
            <person name="Nguyen M."/>
            <person name="Pham P.K."/>
            <person name="Cheuk R.F."/>
            <person name="Karlin-Newmann G."/>
            <person name="Liu S.X."/>
            <person name="Lam B."/>
            <person name="Sakano H."/>
            <person name="Wu T."/>
            <person name="Yu G."/>
            <person name="Miranda M."/>
            <person name="Quach H.L."/>
            <person name="Tripp M."/>
            <person name="Chang C.H."/>
            <person name="Lee J.M."/>
            <person name="Toriumi M.J."/>
            <person name="Chan M.M."/>
            <person name="Tang C.C."/>
            <person name="Onodera C.S."/>
            <person name="Deng J.M."/>
            <person name="Akiyama K."/>
            <person name="Ansari Y."/>
            <person name="Arakawa T."/>
            <person name="Banh J."/>
            <person name="Banno F."/>
            <person name="Bowser L."/>
            <person name="Brooks S.Y."/>
            <person name="Carninci P."/>
            <person name="Chao Q."/>
            <person name="Choy N."/>
            <person name="Enju A."/>
            <person name="Goldsmith A.D."/>
            <person name="Gurjal M."/>
            <person name="Hansen N.F."/>
            <person name="Hayashizaki Y."/>
            <person name="Johnson-Hopson C."/>
            <person name="Hsuan V.W."/>
            <person name="Iida K."/>
            <person name="Karnes M."/>
            <person name="Khan S."/>
            <person name="Koesema E."/>
            <person name="Ishida J."/>
            <person name="Jiang P.X."/>
            <person name="Jones T."/>
            <person name="Kawai J."/>
            <person name="Kamiya A."/>
            <person name="Meyers C."/>
            <person name="Nakajima M."/>
            <person name="Narusaka M."/>
            <person name="Seki M."/>
            <person name="Sakurai T."/>
            <person name="Satou M."/>
            <person name="Tamse R."/>
            <person name="Vaysberg M."/>
            <person name="Wallender E.K."/>
            <person name="Wong C."/>
            <person name="Yamamura Y."/>
            <person name="Yuan S."/>
            <person name="Shinozaki K."/>
            <person name="Davis R.W."/>
            <person name="Theologis A."/>
            <person name="Ecker J.R."/>
        </authorList>
    </citation>
    <scope>NUCLEOTIDE SEQUENCE [LARGE SCALE MRNA]</scope>
    <source>
        <strain>cv. Columbia</strain>
    </source>
</reference>
<reference key="4">
    <citation type="submission" date="2006-07" db="EMBL/GenBank/DDBJ databases">
        <title>Large-scale analysis of RIKEN Arabidopsis full-length (RAFL) cDNAs.</title>
        <authorList>
            <person name="Totoki Y."/>
            <person name="Seki M."/>
            <person name="Ishida J."/>
            <person name="Nakajima M."/>
            <person name="Enju A."/>
            <person name="Kamiya A."/>
            <person name="Narusaka M."/>
            <person name="Shin-i T."/>
            <person name="Nakagawa M."/>
            <person name="Sakamoto N."/>
            <person name="Oishi K."/>
            <person name="Kohara Y."/>
            <person name="Kobayashi M."/>
            <person name="Toyoda A."/>
            <person name="Sakaki Y."/>
            <person name="Sakurai T."/>
            <person name="Iida K."/>
            <person name="Akiyama K."/>
            <person name="Satou M."/>
            <person name="Toyoda T."/>
            <person name="Konagaya A."/>
            <person name="Carninci P."/>
            <person name="Kawai J."/>
            <person name="Hayashizaki Y."/>
            <person name="Shinozaki K."/>
        </authorList>
    </citation>
    <scope>NUCLEOTIDE SEQUENCE [LARGE SCALE MRNA]</scope>
    <source>
        <strain>cv. Columbia</strain>
    </source>
</reference>
<reference key="5">
    <citation type="journal article" date="2009" name="Plant Physiol.">
        <title>Cis-element- and transcriptome-based screening of root hair-specific genes and their functional characterization in Arabidopsis.</title>
        <authorList>
            <person name="Won S.-K."/>
            <person name="Lee Y.-J."/>
            <person name="Lee H.-Y."/>
            <person name="Heo Y.-K."/>
            <person name="Cho M."/>
            <person name="Cho H.-T."/>
        </authorList>
    </citation>
    <scope>TISSUE SPECIFICITY</scope>
</reference>
<reference key="6">
    <citation type="journal article" date="2017" name="Plant Cell Physiol.">
        <title>SRPP, a Cell Wall Protein is Involved in Development and Protection of Seeds and Root Hairs in Arabidopsis thaliana.</title>
        <authorList>
            <person name="Tanaka N."/>
            <person name="Uno H."/>
            <person name="Okuda S."/>
            <person name="Gunji S."/>
            <person name="Ferjani A."/>
            <person name="Aoyama T."/>
            <person name="Maeshima M."/>
        </authorList>
    </citation>
    <scope>FUNCTION</scope>
    <scope>DISRUPTION PHENOTYPE</scope>
    <scope>TISSUE SPECIFICITY</scope>
    <scope>DEVELOPMENTAL STAGE</scope>
    <scope>SUBCELLULAR LOCATION</scope>
    <scope>INDUCTION BY PHOSPHATE DEPRIVATION</scope>
    <source>
        <strain>cv. Columbia</strain>
        <strain>cv. No-0</strain>
        <strain>cv. NR23</strain>
    </source>
</reference>
<reference key="7">
    <citation type="journal article" date="2017" name="Plant Signal. Behav.">
        <title>Enhancement of cell wall protein SRPP expression during emergent root hair development in Arabidopsis.</title>
        <authorList>
            <person name="Uno H."/>
            <person name="Tanaka-Takada N."/>
            <person name="Sato R."/>
            <person name="Maeshima M."/>
        </authorList>
    </citation>
    <scope>FUNCTION</scope>
    <scope>DISRUPTION PHENOTYPE</scope>
    <scope>DEVELOPMENTAL STAGE</scope>
    <scope>INDUCTION BY PHOSPHATE DEPRIVATION</scope>
    <scope>TISSUE SPECIFICITY</scope>
    <source>
        <strain>cv. Columbia</strain>
    </source>
</reference>
<reference key="8">
    <citation type="journal article" date="2019" name="J. Plant Res.">
        <title>A cell-wall protein SRPP provides physiological integrity to the Arabidopsis seed.</title>
        <authorList>
            <person name="Uno H."/>
            <person name="Tanaka-Takada N."/>
            <person name="Hattori M."/>
            <person name="Fukuda M."/>
            <person name="Maeshima M."/>
        </authorList>
    </citation>
    <scope>FUNCTION</scope>
    <scope>DISRUPTION PHENOTYPE</scope>
    <source>
        <strain>cv. Columbia</strain>
        <strain>cv. No-0</strain>
    </source>
</reference>
<comment type="function">
    <text evidence="3 4 5">Contributes to cell wall structure in root hairs and seeds, especially in phosphate (Pi) deprivation conditions or in the presence of ethylene (PubMed:28138059, PubMed:28837399). Particularly important in maternal tissues (pericarps and seed coats) during seed development, especially under stress conditions (PubMed:28138059, PubMed:30673938). Confers thermotolerance in seed germination rate (PubMed:30673938).</text>
</comment>
<comment type="subcellular location">
    <subcellularLocation>
        <location evidence="3">Secreted</location>
        <location evidence="3">Cell wall</location>
    </subcellularLocation>
</comment>
<comment type="tissue specificity">
    <text evidence="2 3 4">Root hair and seed specific expression (PubMed:19448035, PubMed:28138059, PubMed:28837399). Also observed in other tissues including siliques, roots and flowers (PubMed:28138059, PubMed:28837399).</text>
</comment>
<comment type="developmental stage">
    <text evidence="3 4">In roots, observed in root tips and elongating regions of the primary and lateral roots, especially in root hairs and collet hairs (PubMed:28138059). In reproductive organs, present in fruits and anthers (mostly in young anthers) (PubMed:28138059). Later detected in the pericarps and receptacles during maturation of siliques (PubMed:28138059). In siliques, expressed in the embryo (from the initial globular to mature stages), funiculus and seed coat (in the transparent inner integument) (PubMed:28138059). Expression levels are coordinated with root hair cell elongation (PubMed:28837399).</text>
</comment>
<comment type="induction">
    <text evidence="3 4">Accumulates in root hairs within five days under phosphate (Pi) deficient conditions (at protein level).</text>
</comment>
<comment type="disruption phenotype">
    <text evidence="3 4 5">No visible phenotype under normal conditions (PubMed:28138059). Short and abnormally shaped root hairs due to the suppression of cell growth and cell death, and withered seeds, both having a tendency to necrotize and thick cell walls with abnormal structure in phosphate (Pi) deficient conditions or after ethylene treatment (PubMed:28138059, PubMed:28837399). Production of dark brown shrunken seeds unable to germinate, especially in low humidity (PubMed:30673938).</text>
</comment>
<comment type="similarity">
    <text evidence="8">Belongs to the plant proline-rich protein superfamily.</text>
</comment>
<keyword id="KW-0134">Cell wall</keyword>
<keyword id="KW-0217">Developmental protein</keyword>
<keyword id="KW-0936">Ethylene signaling pathway</keyword>
<keyword id="KW-1185">Reference proteome</keyword>
<keyword id="KW-0964">Secreted</keyword>
<keyword id="KW-0732">Signal</keyword>
<keyword id="KW-0346">Stress response</keyword>
<organism>
    <name type="scientific">Arabidopsis thaliana</name>
    <name type="common">Mouse-ear cress</name>
    <dbReference type="NCBI Taxonomy" id="3702"/>
    <lineage>
        <taxon>Eukaryota</taxon>
        <taxon>Viridiplantae</taxon>
        <taxon>Streptophyta</taxon>
        <taxon>Embryophyta</taxon>
        <taxon>Tracheophyta</taxon>
        <taxon>Spermatophyta</taxon>
        <taxon>Magnoliopsida</taxon>
        <taxon>eudicotyledons</taxon>
        <taxon>Gunneridae</taxon>
        <taxon>Pentapetalae</taxon>
        <taxon>rosids</taxon>
        <taxon>malvids</taxon>
        <taxon>Brassicales</taxon>
        <taxon>Brassicaceae</taxon>
        <taxon>Camelineae</taxon>
        <taxon>Arabidopsis</taxon>
    </lineage>
</organism>
<dbReference type="EMBL" id="AF075597">
    <property type="protein sequence ID" value="AAC28181.1"/>
    <property type="molecule type" value="Genomic_DNA"/>
</dbReference>
<dbReference type="EMBL" id="AL161494">
    <property type="protein sequence ID" value="CAB80720.1"/>
    <property type="molecule type" value="Genomic_DNA"/>
</dbReference>
<dbReference type="EMBL" id="CP002687">
    <property type="protein sequence ID" value="AEE82149.1"/>
    <property type="molecule type" value="Genomic_DNA"/>
</dbReference>
<dbReference type="EMBL" id="BT006378">
    <property type="protein sequence ID" value="AAP21186.1"/>
    <property type="molecule type" value="mRNA"/>
</dbReference>
<dbReference type="EMBL" id="AK227972">
    <property type="protein sequence ID" value="BAE99939.1"/>
    <property type="molecule type" value="mRNA"/>
</dbReference>
<dbReference type="PIR" id="T01421">
    <property type="entry name" value="T01421"/>
</dbReference>
<dbReference type="RefSeq" id="NP_192136.1">
    <property type="nucleotide sequence ID" value="NM_116460.4"/>
</dbReference>
<dbReference type="SMR" id="O81417"/>
<dbReference type="FunCoup" id="O81417">
    <property type="interactions" value="14"/>
</dbReference>
<dbReference type="STRING" id="3702.O81417"/>
<dbReference type="PaxDb" id="3702-AT4G02270.1"/>
<dbReference type="ProteomicsDB" id="177112"/>
<dbReference type="EnsemblPlants" id="AT4G02270.1">
    <property type="protein sequence ID" value="AT4G02270.1"/>
    <property type="gene ID" value="AT4G02270"/>
</dbReference>
<dbReference type="GeneID" id="828083"/>
<dbReference type="Gramene" id="AT4G02270.1">
    <property type="protein sequence ID" value="AT4G02270.1"/>
    <property type="gene ID" value="AT4G02270"/>
</dbReference>
<dbReference type="KEGG" id="ath:AT4G02270"/>
<dbReference type="Araport" id="AT4G02270"/>
<dbReference type="TAIR" id="AT4G02270">
    <property type="gene designation" value="RHS13"/>
</dbReference>
<dbReference type="eggNOG" id="ENOG502SZUR">
    <property type="taxonomic scope" value="Eukaryota"/>
</dbReference>
<dbReference type="HOGENOM" id="CLU_033592_0_0_1"/>
<dbReference type="InParanoid" id="O81417"/>
<dbReference type="OMA" id="YSVPPFI"/>
<dbReference type="OrthoDB" id="1847243at2759"/>
<dbReference type="PhylomeDB" id="O81417"/>
<dbReference type="PRO" id="PR:O81417"/>
<dbReference type="Proteomes" id="UP000006548">
    <property type="component" value="Chromosome 4"/>
</dbReference>
<dbReference type="ExpressionAtlas" id="O81417">
    <property type="expression patterns" value="baseline and differential"/>
</dbReference>
<dbReference type="GO" id="GO:0005576">
    <property type="term" value="C:extracellular region"/>
    <property type="evidence" value="ECO:0007669"/>
    <property type="project" value="UniProtKB-KW"/>
</dbReference>
<dbReference type="GO" id="GO:0009505">
    <property type="term" value="C:plant-type cell wall"/>
    <property type="evidence" value="ECO:0000314"/>
    <property type="project" value="TAIR"/>
</dbReference>
<dbReference type="GO" id="GO:0016036">
    <property type="term" value="P:cellular response to phosphate starvation"/>
    <property type="evidence" value="ECO:0000315"/>
    <property type="project" value="UniProtKB"/>
</dbReference>
<dbReference type="GO" id="GO:0009873">
    <property type="term" value="P:ethylene-activated signaling pathway"/>
    <property type="evidence" value="ECO:0007669"/>
    <property type="project" value="UniProtKB-KW"/>
</dbReference>
<dbReference type="GO" id="GO:0010286">
    <property type="term" value="P:heat acclimation"/>
    <property type="evidence" value="ECO:0000315"/>
    <property type="project" value="UniProtKB"/>
</dbReference>
<dbReference type="GO" id="GO:0009832">
    <property type="term" value="P:plant-type cell wall biogenesis"/>
    <property type="evidence" value="ECO:0000315"/>
    <property type="project" value="TAIR"/>
</dbReference>
<dbReference type="GO" id="GO:0009723">
    <property type="term" value="P:response to ethylene"/>
    <property type="evidence" value="ECO:0000315"/>
    <property type="project" value="UniProtKB"/>
</dbReference>
<dbReference type="GO" id="GO:0090547">
    <property type="term" value="P:response to low humidity"/>
    <property type="evidence" value="ECO:0000315"/>
    <property type="project" value="UniProtKB"/>
</dbReference>
<dbReference type="GO" id="GO:0080147">
    <property type="term" value="P:root hair cell development"/>
    <property type="evidence" value="ECO:0000315"/>
    <property type="project" value="UniProtKB"/>
</dbReference>
<dbReference type="GO" id="GO:0048316">
    <property type="term" value="P:seed development"/>
    <property type="evidence" value="ECO:0000315"/>
    <property type="project" value="UniProtKB"/>
</dbReference>
<dbReference type="GO" id="GO:0009826">
    <property type="term" value="P:unidimensional cell growth"/>
    <property type="evidence" value="ECO:0000270"/>
    <property type="project" value="UniProtKB"/>
</dbReference>
<dbReference type="PANTHER" id="PTHR33470">
    <property type="entry name" value="OS01G0164075 PROTEIN"/>
    <property type="match status" value="1"/>
</dbReference>
<dbReference type="PANTHER" id="PTHR33470:SF40">
    <property type="entry name" value="PROTEIN SEED AND ROOT HAIR PROTECTIVE PROTEIN"/>
    <property type="match status" value="1"/>
</dbReference>
<dbReference type="Pfam" id="PF01190">
    <property type="entry name" value="Pollen_Ole_e_1"/>
    <property type="match status" value="1"/>
</dbReference>
<name>SRPP_ARATH</name>
<protein>
    <recommendedName>
        <fullName evidence="7">Protein SEED AND ROOT HAIR PROTECTIVE PROTEIN</fullName>
    </recommendedName>
    <alternativeName>
        <fullName evidence="6">Protein ROOT HAIR SPECIFIC 13</fullName>
    </alternativeName>
</protein>
<proteinExistence type="evidence at protein level"/>
<sequence length="165" mass="18103">MAFSRLSFAASLIVFSSLIISSVAYYGNEADPETGKLIPIAVEGIIKCKSGGKTYPIQGATARIACVKVDAYGNELVPISILSSKTDAKGYFIATIFPSQLRAGRTVTKCKTYLYKSPLADCDFPTDVNKGVRGQPLSTYRILQDKSFKLYWAGPFFYTSEPTYY</sequence>
<feature type="signal peptide" evidence="1">
    <location>
        <begin position="1"/>
        <end position="24"/>
    </location>
</feature>
<feature type="chain" id="PRO_5014306609" description="Protein SEED AND ROOT HAIR PROTECTIVE PROTEIN">
    <location>
        <begin position="25"/>
        <end position="165"/>
    </location>
</feature>
<evidence type="ECO:0000255" key="1"/>
<evidence type="ECO:0000269" key="2">
    <source>
    </source>
</evidence>
<evidence type="ECO:0000269" key="3">
    <source>
    </source>
</evidence>
<evidence type="ECO:0000269" key="4">
    <source>
    </source>
</evidence>
<evidence type="ECO:0000269" key="5">
    <source>
    </source>
</evidence>
<evidence type="ECO:0000303" key="6">
    <source>
    </source>
</evidence>
<evidence type="ECO:0000303" key="7">
    <source>
    </source>
</evidence>
<evidence type="ECO:0000305" key="8"/>
<evidence type="ECO:0000312" key="9">
    <source>
        <dbReference type="Araport" id="AT4G02270"/>
    </source>
</evidence>
<evidence type="ECO:0000312" key="10">
    <source>
        <dbReference type="EMBL" id="AAC28181.1"/>
    </source>
</evidence>
<accession>O81417</accession>